<protein>
    <recommendedName>
        <fullName evidence="1">Putative membrane protein insertion efficiency factor</fullName>
    </recommendedName>
</protein>
<name>YIDD_STACT</name>
<evidence type="ECO:0000255" key="1">
    <source>
        <dbReference type="HAMAP-Rule" id="MF_00386"/>
    </source>
</evidence>
<gene>
    <name type="ordered locus">Sca_1393</name>
</gene>
<proteinExistence type="inferred from homology"/>
<dbReference type="EMBL" id="AM295250">
    <property type="protein sequence ID" value="CAL28298.1"/>
    <property type="molecule type" value="Genomic_DNA"/>
</dbReference>
<dbReference type="RefSeq" id="WP_015900638.1">
    <property type="nucleotide sequence ID" value="NC_012121.1"/>
</dbReference>
<dbReference type="GeneID" id="93793810"/>
<dbReference type="KEGG" id="sca:SCA_1393"/>
<dbReference type="eggNOG" id="COG0759">
    <property type="taxonomic scope" value="Bacteria"/>
</dbReference>
<dbReference type="HOGENOM" id="CLU_144811_6_0_9"/>
<dbReference type="OrthoDB" id="9801753at2"/>
<dbReference type="BioCyc" id="SCAR396513:SCA_RS06915-MONOMER"/>
<dbReference type="Proteomes" id="UP000000444">
    <property type="component" value="Chromosome"/>
</dbReference>
<dbReference type="GO" id="GO:0005886">
    <property type="term" value="C:plasma membrane"/>
    <property type="evidence" value="ECO:0007669"/>
    <property type="project" value="UniProtKB-SubCell"/>
</dbReference>
<dbReference type="HAMAP" id="MF_00386">
    <property type="entry name" value="UPF0161_YidD"/>
    <property type="match status" value="1"/>
</dbReference>
<dbReference type="InterPro" id="IPR002696">
    <property type="entry name" value="Membr_insert_effic_factor_YidD"/>
</dbReference>
<dbReference type="NCBIfam" id="TIGR00278">
    <property type="entry name" value="membrane protein insertion efficiency factor YidD"/>
    <property type="match status" value="1"/>
</dbReference>
<dbReference type="PANTHER" id="PTHR33383">
    <property type="entry name" value="MEMBRANE PROTEIN INSERTION EFFICIENCY FACTOR-RELATED"/>
    <property type="match status" value="1"/>
</dbReference>
<dbReference type="PANTHER" id="PTHR33383:SF1">
    <property type="entry name" value="MEMBRANE PROTEIN INSERTION EFFICIENCY FACTOR-RELATED"/>
    <property type="match status" value="1"/>
</dbReference>
<dbReference type="Pfam" id="PF01809">
    <property type="entry name" value="YidD"/>
    <property type="match status" value="1"/>
</dbReference>
<dbReference type="SMART" id="SM01234">
    <property type="entry name" value="Haemolytic"/>
    <property type="match status" value="1"/>
</dbReference>
<feature type="chain" id="PRO_1000197783" description="Putative membrane protein insertion efficiency factor">
    <location>
        <begin position="1"/>
        <end position="84"/>
    </location>
</feature>
<organism>
    <name type="scientific">Staphylococcus carnosus (strain TM300)</name>
    <dbReference type="NCBI Taxonomy" id="396513"/>
    <lineage>
        <taxon>Bacteria</taxon>
        <taxon>Bacillati</taxon>
        <taxon>Bacillota</taxon>
        <taxon>Bacilli</taxon>
        <taxon>Bacillales</taxon>
        <taxon>Staphylococcaceae</taxon>
        <taxon>Staphylococcus</taxon>
    </lineage>
</organism>
<reference key="1">
    <citation type="journal article" date="2009" name="Appl. Environ. Microbiol.">
        <title>Genome analysis of the meat starter culture bacterium Staphylococcus carnosus TM300.</title>
        <authorList>
            <person name="Rosenstein R."/>
            <person name="Nerz C."/>
            <person name="Biswas L."/>
            <person name="Resch A."/>
            <person name="Raddatz G."/>
            <person name="Schuster S.C."/>
            <person name="Goetz F."/>
        </authorList>
    </citation>
    <scope>NUCLEOTIDE SEQUENCE [LARGE SCALE GENOMIC DNA]</scope>
    <source>
        <strain>TM300</strain>
    </source>
</reference>
<comment type="function">
    <text evidence="1">Could be involved in insertion of integral membrane proteins into the membrane.</text>
</comment>
<comment type="subcellular location">
    <subcellularLocation>
        <location evidence="1">Cell membrane</location>
        <topology evidence="1">Peripheral membrane protein</topology>
        <orientation evidence="1">Cytoplasmic side</orientation>
    </subcellularLocation>
</comment>
<comment type="similarity">
    <text evidence="1">Belongs to the UPF0161 family.</text>
</comment>
<keyword id="KW-1003">Cell membrane</keyword>
<keyword id="KW-0472">Membrane</keyword>
<keyword id="KW-1185">Reference proteome</keyword>
<accession>B9DN23</accession>
<sequence>MKKLFLGLIWVYQRFISPLTPPSCRFYPTCSNYTKEAIEVHGPIKGAWLGIKRISKCHPLHKGGFDPVPLKKDNNHQHCEHHHH</sequence>